<comment type="function">
    <text evidence="1">Catalyzes the terminal and only committed step in triacylglycerol synthesis by using diacylglycerol and fatty acyl CoA as substrates. Required for storage lipid synthesis.</text>
</comment>
<comment type="function">
    <text evidence="2">Upon expression in E.coli functions as a triacylglycerol synthase, making triacylglycerol (TG) from diolein and long-chain fatty acyl-CoA. Has no wax synthase activity to produce wax esters.</text>
</comment>
<comment type="catalytic activity">
    <reaction evidence="2">
        <text>an acyl-CoA + a 1,2-diacyl-sn-glycerol = a triacyl-sn-glycerol + CoA</text>
        <dbReference type="Rhea" id="RHEA:10868"/>
        <dbReference type="ChEBI" id="CHEBI:17815"/>
        <dbReference type="ChEBI" id="CHEBI:57287"/>
        <dbReference type="ChEBI" id="CHEBI:58342"/>
        <dbReference type="ChEBI" id="CHEBI:64615"/>
        <dbReference type="EC" id="2.3.1.20"/>
    </reaction>
</comment>
<comment type="catalytic activity">
    <reaction evidence="2">
        <text>di-(9Z)-octadecenoylglycerol + (9Z)-octadecenoyl-CoA = 1,2,3-tri-(9Z-octadecenoyl)-glycerol + CoA</text>
        <dbReference type="Rhea" id="RHEA:45780"/>
        <dbReference type="ChEBI" id="CHEBI:53753"/>
        <dbReference type="ChEBI" id="CHEBI:57287"/>
        <dbReference type="ChEBI" id="CHEBI:57387"/>
        <dbReference type="ChEBI" id="CHEBI:75945"/>
    </reaction>
    <physiologicalReaction direction="left-to-right" evidence="2">
        <dbReference type="Rhea" id="RHEA:45781"/>
    </physiologicalReaction>
</comment>
<comment type="biophysicochemical properties">
    <phDependence>
        <text evidence="2">Optimum pH is 6.5.</text>
    </phDependence>
</comment>
<comment type="pathway">
    <text>Glycerolipid metabolism; triacylglycerol biosynthesis.</text>
</comment>
<comment type="induction">
    <text evidence="2">A possible member of the dormancy regulon. Induced in response to reduced oxygen tension (hypoxia), it is not induced by nitric oxide exposure.</text>
</comment>
<comment type="similarity">
    <text evidence="3">Belongs to the long-chain O-acyltransferase family.</text>
</comment>
<comment type="caution">
    <text evidence="3">Lacks the conserved His residue in position 138 suggested to serve as a proton acceptor for this family, however this protein still has diacyglycerol O-acyltransferase activity in E.coli.</text>
</comment>
<accession>P9WKC5</accession>
<accession>L0TC77</accession>
<accession>O05879</accession>
<keyword id="KW-0012">Acyltransferase</keyword>
<keyword id="KW-0319">Glycerol metabolism</keyword>
<keyword id="KW-0444">Lipid biosynthesis</keyword>
<keyword id="KW-0443">Lipid metabolism</keyword>
<keyword id="KW-1185">Reference proteome</keyword>
<keyword id="KW-0808">Transferase</keyword>
<gene>
    <name type="primary">tgs3</name>
    <name type="ordered locus">Rv3234c</name>
    <name type="ORF">MTCY20B11.09c</name>
</gene>
<sequence length="271" mass="30379">MVTRLSASDASFYQLENTATPMYVGLLLILRRPRAGLSYEALLETVEQRLPQIPRYRQKVQEVKLGLARPVWIDDRDFDITYHVRRSALPSPGSDEQLHELIARLAARPLDKSRPLWEMYLVEGLEKNRIALYTKSHQALINGVTALAIGHVIADRTRRPPAFPEDIWVPERDPGTTRLLLRAVGDWLVRPGAQLQAVGSAVAGLVTNSGQLVETGRKVLDIARTVARGTAPSSPLNATVSRNRRFTVARASLDDYRTVRARYDCDSTTWC</sequence>
<proteinExistence type="evidence at protein level"/>
<dbReference type="EC" id="2.3.1.20" evidence="2"/>
<dbReference type="EMBL" id="AL123456">
    <property type="protein sequence ID" value="CCP46053.1"/>
    <property type="molecule type" value="Genomic_DNA"/>
</dbReference>
<dbReference type="PIR" id="D70591">
    <property type="entry name" value="D70591"/>
</dbReference>
<dbReference type="RefSeq" id="NP_217751.1">
    <property type="nucleotide sequence ID" value="NC_000962.3"/>
</dbReference>
<dbReference type="RefSeq" id="WP_003899981.1">
    <property type="nucleotide sequence ID" value="NC_000962.3"/>
</dbReference>
<dbReference type="SMR" id="P9WKC5"/>
<dbReference type="STRING" id="83332.Rv3234c"/>
<dbReference type="SwissLipids" id="SLP:000001148"/>
<dbReference type="PaxDb" id="83332-Rv3234c"/>
<dbReference type="DNASU" id="888767"/>
<dbReference type="GeneID" id="888767"/>
<dbReference type="KEGG" id="mtu:Rv3234c"/>
<dbReference type="KEGG" id="mtv:RVBD_3234c"/>
<dbReference type="PATRIC" id="fig|83332.111.peg.3612"/>
<dbReference type="TubercuList" id="Rv3234c"/>
<dbReference type="eggNOG" id="COG1020">
    <property type="taxonomic scope" value="Bacteria"/>
</dbReference>
<dbReference type="InParanoid" id="P9WKC5"/>
<dbReference type="OrthoDB" id="9810950at2"/>
<dbReference type="PhylomeDB" id="P9WKC5"/>
<dbReference type="BRENDA" id="2.3.1.20">
    <property type="organism ID" value="3445"/>
</dbReference>
<dbReference type="UniPathway" id="UPA00282"/>
<dbReference type="Proteomes" id="UP000001584">
    <property type="component" value="Chromosome"/>
</dbReference>
<dbReference type="GO" id="GO:0005886">
    <property type="term" value="C:plasma membrane"/>
    <property type="evidence" value="ECO:0000318"/>
    <property type="project" value="GO_Central"/>
</dbReference>
<dbReference type="GO" id="GO:0004144">
    <property type="term" value="F:diacylglycerol O-acyltransferase activity"/>
    <property type="evidence" value="ECO:0000314"/>
    <property type="project" value="MTBBASE"/>
</dbReference>
<dbReference type="GO" id="GO:0008374">
    <property type="term" value="F:O-acyltransferase activity"/>
    <property type="evidence" value="ECO:0000318"/>
    <property type="project" value="GO_Central"/>
</dbReference>
<dbReference type="GO" id="GO:0051701">
    <property type="term" value="P:biological process involved in interaction with host"/>
    <property type="evidence" value="ECO:0000318"/>
    <property type="project" value="GO_Central"/>
</dbReference>
<dbReference type="GO" id="GO:0006071">
    <property type="term" value="P:glycerol metabolic process"/>
    <property type="evidence" value="ECO:0007669"/>
    <property type="project" value="UniProtKB-KW"/>
</dbReference>
<dbReference type="GO" id="GO:0045017">
    <property type="term" value="P:glycerolipid biosynthetic process"/>
    <property type="evidence" value="ECO:0000314"/>
    <property type="project" value="MTBBASE"/>
</dbReference>
<dbReference type="GO" id="GO:0001666">
    <property type="term" value="P:response to hypoxia"/>
    <property type="evidence" value="ECO:0000270"/>
    <property type="project" value="MTBBASE"/>
</dbReference>
<dbReference type="GO" id="GO:0071731">
    <property type="term" value="P:response to nitric oxide"/>
    <property type="evidence" value="ECO:0000318"/>
    <property type="project" value="GO_Central"/>
</dbReference>
<dbReference type="GO" id="GO:0019432">
    <property type="term" value="P:triglyceride biosynthetic process"/>
    <property type="evidence" value="ECO:0000314"/>
    <property type="project" value="MTBBASE"/>
</dbReference>
<dbReference type="InterPro" id="IPR045034">
    <property type="entry name" value="O-acyltransferase_WSD1-like"/>
</dbReference>
<dbReference type="InterPro" id="IPR004255">
    <property type="entry name" value="O-acyltransferase_WSD1_N"/>
</dbReference>
<dbReference type="PANTHER" id="PTHR31650">
    <property type="entry name" value="O-ACYLTRANSFERASE (WSD1-LIKE) FAMILY PROTEIN"/>
    <property type="match status" value="1"/>
</dbReference>
<dbReference type="PANTHER" id="PTHR31650:SF1">
    <property type="entry name" value="WAX ESTER SYNTHASE_DIACYLGLYCEROL ACYLTRANSFERASE 4-RELATED"/>
    <property type="match status" value="1"/>
</dbReference>
<dbReference type="Pfam" id="PF03007">
    <property type="entry name" value="WS_DGAT_cat"/>
    <property type="match status" value="1"/>
</dbReference>
<dbReference type="SUPFAM" id="SSF52777">
    <property type="entry name" value="CoA-dependent acyltransferases"/>
    <property type="match status" value="1"/>
</dbReference>
<reference key="1">
    <citation type="journal article" date="1998" name="Nature">
        <title>Deciphering the biology of Mycobacterium tuberculosis from the complete genome sequence.</title>
        <authorList>
            <person name="Cole S.T."/>
            <person name="Brosch R."/>
            <person name="Parkhill J."/>
            <person name="Garnier T."/>
            <person name="Churcher C.M."/>
            <person name="Harris D.E."/>
            <person name="Gordon S.V."/>
            <person name="Eiglmeier K."/>
            <person name="Gas S."/>
            <person name="Barry C.E. III"/>
            <person name="Tekaia F."/>
            <person name="Badcock K."/>
            <person name="Basham D."/>
            <person name="Brown D."/>
            <person name="Chillingworth T."/>
            <person name="Connor R."/>
            <person name="Davies R.M."/>
            <person name="Devlin K."/>
            <person name="Feltwell T."/>
            <person name="Gentles S."/>
            <person name="Hamlin N."/>
            <person name="Holroyd S."/>
            <person name="Hornsby T."/>
            <person name="Jagels K."/>
            <person name="Krogh A."/>
            <person name="McLean J."/>
            <person name="Moule S."/>
            <person name="Murphy L.D."/>
            <person name="Oliver S."/>
            <person name="Osborne J."/>
            <person name="Quail M.A."/>
            <person name="Rajandream M.A."/>
            <person name="Rogers J."/>
            <person name="Rutter S."/>
            <person name="Seeger K."/>
            <person name="Skelton S."/>
            <person name="Squares S."/>
            <person name="Squares R."/>
            <person name="Sulston J.E."/>
            <person name="Taylor K."/>
            <person name="Whitehead S."/>
            <person name="Barrell B.G."/>
        </authorList>
    </citation>
    <scope>NUCLEOTIDE SEQUENCE [LARGE SCALE GENOMIC DNA]</scope>
    <source>
        <strain>ATCC 25618 / H37Rv</strain>
    </source>
</reference>
<reference key="2">
    <citation type="journal article" date="2004" name="J. Bacteriol.">
        <title>Induction of a novel class of diacylglycerol acyltransferases and triacylglycerol accumulation in Mycobacterium tuberculosis as it goes into a dormancy-like state in culture.</title>
        <authorList>
            <person name="Daniel J."/>
            <person name="Deb C."/>
            <person name="Dubey V.S."/>
            <person name="Sirakova T.D."/>
            <person name="Abomoelak B."/>
            <person name="Morbidoni H.R."/>
            <person name="Kolattukudy P.E."/>
        </authorList>
    </citation>
    <scope>FUNCTION IN E.COLI</scope>
    <scope>CATALYTIC ACTIVITY</scope>
    <scope>PH DEPENDENCE</scope>
    <scope>INDUCTION BY HYPOXIA</scope>
    <source>
        <strain>ATCC 25618 / H37Rv</strain>
    </source>
</reference>
<reference key="3">
    <citation type="journal article" date="2011" name="Mol. Cell. Proteomics">
        <title>Proteogenomic analysis of Mycobacterium tuberculosis by high resolution mass spectrometry.</title>
        <authorList>
            <person name="Kelkar D.S."/>
            <person name="Kumar D."/>
            <person name="Kumar P."/>
            <person name="Balakrishnan L."/>
            <person name="Muthusamy B."/>
            <person name="Yadav A.K."/>
            <person name="Shrivastava P."/>
            <person name="Marimuthu A."/>
            <person name="Anand S."/>
            <person name="Sundaram H."/>
            <person name="Kingsbury R."/>
            <person name="Harsha H.C."/>
            <person name="Nair B."/>
            <person name="Prasad T.S."/>
            <person name="Chauhan D.S."/>
            <person name="Katoch K."/>
            <person name="Katoch V.M."/>
            <person name="Kumar P."/>
            <person name="Chaerkady R."/>
            <person name="Ramachandran S."/>
            <person name="Dash D."/>
            <person name="Pandey A."/>
        </authorList>
    </citation>
    <scope>IDENTIFICATION BY MASS SPECTROMETRY [LARGE SCALE ANALYSIS]</scope>
    <source>
        <strain>ATCC 25618 / H37Rv</strain>
    </source>
</reference>
<protein>
    <recommendedName>
        <fullName>Probable diacyglycerol O-acyltransferase tgs3</fullName>
        <shortName>TGS3</shortName>
        <ecNumber evidence="2">2.3.1.20</ecNumber>
    </recommendedName>
    <alternativeName>
        <fullName>Probable triacylglycerol synthase tgs3</fullName>
    </alternativeName>
</protein>
<name>TGS3_MYCTU</name>
<feature type="chain" id="PRO_0000222918" description="Probable diacyglycerol O-acyltransferase tgs3">
    <location>
        <begin position="1"/>
        <end position="271"/>
    </location>
</feature>
<evidence type="ECO:0000250" key="1">
    <source>
        <dbReference type="UniProtKB" id="P9WKC9"/>
    </source>
</evidence>
<evidence type="ECO:0000269" key="2">
    <source>
    </source>
</evidence>
<evidence type="ECO:0000305" key="3"/>
<organism>
    <name type="scientific">Mycobacterium tuberculosis (strain ATCC 25618 / H37Rv)</name>
    <dbReference type="NCBI Taxonomy" id="83332"/>
    <lineage>
        <taxon>Bacteria</taxon>
        <taxon>Bacillati</taxon>
        <taxon>Actinomycetota</taxon>
        <taxon>Actinomycetes</taxon>
        <taxon>Mycobacteriales</taxon>
        <taxon>Mycobacteriaceae</taxon>
        <taxon>Mycobacterium</taxon>
        <taxon>Mycobacterium tuberculosis complex</taxon>
    </lineage>
</organism>